<organism>
    <name type="scientific">Pseudomonas putida (strain ATCC 47054 / DSM 6125 / CFBP 8728 / NCIMB 11950 / KT2440)</name>
    <dbReference type="NCBI Taxonomy" id="160488"/>
    <lineage>
        <taxon>Bacteria</taxon>
        <taxon>Pseudomonadati</taxon>
        <taxon>Pseudomonadota</taxon>
        <taxon>Gammaproteobacteria</taxon>
        <taxon>Pseudomonadales</taxon>
        <taxon>Pseudomonadaceae</taxon>
        <taxon>Pseudomonas</taxon>
    </lineage>
</organism>
<evidence type="ECO:0000255" key="1">
    <source>
        <dbReference type="HAMAP-Rule" id="MF_00392"/>
    </source>
</evidence>
<accession>Q88MG7</accession>
<sequence length="375" mass="41194">MAQLCVALVAGEASGDILGSGLMRALKARHPDVRFIGVGGPLMEAEGLQSYFPMERLAVMGLVEVLGRLRELLKRRKLLIQTLIEEKPDVFIGIDAPDFTLNIELKLRQAGIKTVHYVSPSVWAWRQKRVLKIREGCDLMLTLLPFEARFYEEQGVPVRFVGHPLADTIPLEADRPAARAALGLGEGPVVALMPGSRGGEVGRLGALFLDAAERLSQQVPGVRFVLPCANATRRAQIEQMLEGRQLPLTLLDGQSHQALAACDAVLIASGTATLEALLYKRPMVVAYRLAPLTFWILKRLVKSPYVSLPNLLAQRELVPELLQDDATSEALANTLAPLVRDGSQQTERFDEIHRTLRRDASNQAAEAVLALLKDR</sequence>
<keyword id="KW-0328">Glycosyltransferase</keyword>
<keyword id="KW-0441">Lipid A biosynthesis</keyword>
<keyword id="KW-0444">Lipid biosynthesis</keyword>
<keyword id="KW-0443">Lipid metabolism</keyword>
<keyword id="KW-1185">Reference proteome</keyword>
<keyword id="KW-0808">Transferase</keyword>
<protein>
    <recommendedName>
        <fullName evidence="1">Lipid-A-disaccharide synthase</fullName>
        <ecNumber evidence="1">2.4.1.182</ecNumber>
    </recommendedName>
</protein>
<dbReference type="EC" id="2.4.1.182" evidence="1"/>
<dbReference type="EMBL" id="AE015451">
    <property type="protein sequence ID" value="AAN67225.1"/>
    <property type="molecule type" value="Genomic_DNA"/>
</dbReference>
<dbReference type="RefSeq" id="NP_743761.1">
    <property type="nucleotide sequence ID" value="NC_002947.4"/>
</dbReference>
<dbReference type="RefSeq" id="WP_010952682.1">
    <property type="nucleotide sequence ID" value="NZ_CP169744.1"/>
</dbReference>
<dbReference type="SMR" id="Q88MG7"/>
<dbReference type="STRING" id="160488.PP_1604"/>
<dbReference type="CAZy" id="GT19">
    <property type="family name" value="Glycosyltransferase Family 19"/>
</dbReference>
<dbReference type="PaxDb" id="160488-PP_1604"/>
<dbReference type="GeneID" id="83681916"/>
<dbReference type="KEGG" id="ppu:PP_1604"/>
<dbReference type="PATRIC" id="fig|160488.4.peg.1695"/>
<dbReference type="eggNOG" id="COG0763">
    <property type="taxonomic scope" value="Bacteria"/>
</dbReference>
<dbReference type="HOGENOM" id="CLU_036577_3_0_6"/>
<dbReference type="OrthoDB" id="9801642at2"/>
<dbReference type="PhylomeDB" id="Q88MG7"/>
<dbReference type="BioCyc" id="PPUT160488:G1G01-1701-MONOMER"/>
<dbReference type="UniPathway" id="UPA00973"/>
<dbReference type="Proteomes" id="UP000000556">
    <property type="component" value="Chromosome"/>
</dbReference>
<dbReference type="GO" id="GO:0016020">
    <property type="term" value="C:membrane"/>
    <property type="evidence" value="ECO:0007669"/>
    <property type="project" value="GOC"/>
</dbReference>
<dbReference type="GO" id="GO:0008915">
    <property type="term" value="F:lipid-A-disaccharide synthase activity"/>
    <property type="evidence" value="ECO:0007669"/>
    <property type="project" value="UniProtKB-UniRule"/>
</dbReference>
<dbReference type="GO" id="GO:0005543">
    <property type="term" value="F:phospholipid binding"/>
    <property type="evidence" value="ECO:0007669"/>
    <property type="project" value="TreeGrafter"/>
</dbReference>
<dbReference type="GO" id="GO:0009245">
    <property type="term" value="P:lipid A biosynthetic process"/>
    <property type="evidence" value="ECO:0007669"/>
    <property type="project" value="UniProtKB-UniRule"/>
</dbReference>
<dbReference type="Gene3D" id="3.40.50.2000">
    <property type="entry name" value="Glycogen Phosphorylase B"/>
    <property type="match status" value="1"/>
</dbReference>
<dbReference type="HAMAP" id="MF_00392">
    <property type="entry name" value="LpxB"/>
    <property type="match status" value="1"/>
</dbReference>
<dbReference type="InterPro" id="IPR003835">
    <property type="entry name" value="Glyco_trans_19"/>
</dbReference>
<dbReference type="NCBIfam" id="TIGR00215">
    <property type="entry name" value="lpxB"/>
    <property type="match status" value="1"/>
</dbReference>
<dbReference type="PANTHER" id="PTHR30372">
    <property type="entry name" value="LIPID-A-DISACCHARIDE SYNTHASE"/>
    <property type="match status" value="1"/>
</dbReference>
<dbReference type="PANTHER" id="PTHR30372:SF4">
    <property type="entry name" value="LIPID-A-DISACCHARIDE SYNTHASE, MITOCHONDRIAL-RELATED"/>
    <property type="match status" value="1"/>
</dbReference>
<dbReference type="Pfam" id="PF02684">
    <property type="entry name" value="LpxB"/>
    <property type="match status" value="1"/>
</dbReference>
<dbReference type="SUPFAM" id="SSF53756">
    <property type="entry name" value="UDP-Glycosyltransferase/glycogen phosphorylase"/>
    <property type="match status" value="1"/>
</dbReference>
<gene>
    <name evidence="1" type="primary">lpxB</name>
    <name type="ordered locus">PP_1604</name>
</gene>
<proteinExistence type="inferred from homology"/>
<name>LPXB_PSEPK</name>
<comment type="function">
    <text evidence="1">Condensation of UDP-2,3-diacylglucosamine and 2,3-diacylglucosamine-1-phosphate to form lipid A disaccharide, a precursor of lipid A, a phosphorylated glycolipid that anchors the lipopolysaccharide to the outer membrane of the cell.</text>
</comment>
<comment type="catalytic activity">
    <reaction evidence="1">
        <text>a lipid X + a UDP-2-N,3-O-bis[(3R)-3-hydroxyacyl]-alpha-D-glucosamine = a lipid A disaccharide + UDP + H(+)</text>
        <dbReference type="Rhea" id="RHEA:67828"/>
        <dbReference type="ChEBI" id="CHEBI:15378"/>
        <dbReference type="ChEBI" id="CHEBI:58223"/>
        <dbReference type="ChEBI" id="CHEBI:137748"/>
        <dbReference type="ChEBI" id="CHEBI:176338"/>
        <dbReference type="ChEBI" id="CHEBI:176343"/>
        <dbReference type="EC" id="2.4.1.182"/>
    </reaction>
</comment>
<comment type="pathway">
    <text evidence="1">Bacterial outer membrane biogenesis; LPS lipid A biosynthesis.</text>
</comment>
<comment type="similarity">
    <text evidence="1">Belongs to the LpxB family.</text>
</comment>
<feature type="chain" id="PRO_0000190178" description="Lipid-A-disaccharide synthase">
    <location>
        <begin position="1"/>
        <end position="375"/>
    </location>
</feature>
<reference key="1">
    <citation type="journal article" date="2002" name="Environ. Microbiol.">
        <title>Complete genome sequence and comparative analysis of the metabolically versatile Pseudomonas putida KT2440.</title>
        <authorList>
            <person name="Nelson K.E."/>
            <person name="Weinel C."/>
            <person name="Paulsen I.T."/>
            <person name="Dodson R.J."/>
            <person name="Hilbert H."/>
            <person name="Martins dos Santos V.A.P."/>
            <person name="Fouts D.E."/>
            <person name="Gill S.R."/>
            <person name="Pop M."/>
            <person name="Holmes M."/>
            <person name="Brinkac L.M."/>
            <person name="Beanan M.J."/>
            <person name="DeBoy R.T."/>
            <person name="Daugherty S.C."/>
            <person name="Kolonay J.F."/>
            <person name="Madupu R."/>
            <person name="Nelson W.C."/>
            <person name="White O."/>
            <person name="Peterson J.D."/>
            <person name="Khouri H.M."/>
            <person name="Hance I."/>
            <person name="Chris Lee P."/>
            <person name="Holtzapple E.K."/>
            <person name="Scanlan D."/>
            <person name="Tran K."/>
            <person name="Moazzez A."/>
            <person name="Utterback T.R."/>
            <person name="Rizzo M."/>
            <person name="Lee K."/>
            <person name="Kosack D."/>
            <person name="Moestl D."/>
            <person name="Wedler H."/>
            <person name="Lauber J."/>
            <person name="Stjepandic D."/>
            <person name="Hoheisel J."/>
            <person name="Straetz M."/>
            <person name="Heim S."/>
            <person name="Kiewitz C."/>
            <person name="Eisen J.A."/>
            <person name="Timmis K.N."/>
            <person name="Duesterhoeft A."/>
            <person name="Tuemmler B."/>
            <person name="Fraser C.M."/>
        </authorList>
    </citation>
    <scope>NUCLEOTIDE SEQUENCE [LARGE SCALE GENOMIC DNA]</scope>
    <source>
        <strain>ATCC 47054 / DSM 6125 / CFBP 8728 / NCIMB 11950 / KT2440</strain>
    </source>
</reference>